<accession>P81733</accession>
<accession>P81734</accession>
<name>TRP2_RHYMA</name>
<proteinExistence type="evidence at protein level"/>
<keyword id="KW-0027">Amidation</keyword>
<keyword id="KW-0165">Cleavage on pair of basic residues</keyword>
<keyword id="KW-0903">Direct protein sequencing</keyword>
<keyword id="KW-0527">Neuropeptide</keyword>
<keyword id="KW-0964">Secreted</keyword>
<organism>
    <name type="scientific">Rhyparobia maderae</name>
    <name type="common">Madeira cockroach</name>
    <name type="synonym">Leucophaea maderae</name>
    <dbReference type="NCBI Taxonomy" id="36963"/>
    <lineage>
        <taxon>Eukaryota</taxon>
        <taxon>Metazoa</taxon>
        <taxon>Ecdysozoa</taxon>
        <taxon>Arthropoda</taxon>
        <taxon>Hexapoda</taxon>
        <taxon>Insecta</taxon>
        <taxon>Pterygota</taxon>
        <taxon>Neoptera</taxon>
        <taxon>Polyneoptera</taxon>
        <taxon>Dictyoptera</taxon>
        <taxon>Blattodea</taxon>
        <taxon>Blaberoidea</taxon>
        <taxon>Blaberidae</taxon>
        <taxon>Oxyhaloinae</taxon>
        <taxon>Rhyparobia</taxon>
    </lineage>
</organism>
<reference key="1">
    <citation type="journal article" date="1996" name="Regul. Pept.">
        <title>Isolation of five tachykinin-related peptides from the midgut of the cockroach Leucophaea maderae: existence of N-terminally extended isoforms.</title>
        <authorList>
            <person name="Muren J.E."/>
            <person name="Naessel D.R."/>
        </authorList>
    </citation>
    <scope>PROTEIN SEQUENCE</scope>
    <scope>AMIDATION AT ARG-17</scope>
    <source>
        <tissue>Midgut</tissue>
    </source>
</reference>
<reference key="2">
    <citation type="journal article" date="1997" name="Peptides">
        <title>Seven tachykinin-related peptides isolated from the brain of the madeira cockroach; evidence for tissue-specific expression of isoforms.</title>
        <authorList>
            <person name="Muren J.E."/>
            <person name="Naessel D.R."/>
        </authorList>
    </citation>
    <scope>CHARACTERIZATION</scope>
    <scope>MASS SPECTROMETRY</scope>
    <source>
        <tissue>Brain</tissue>
    </source>
</reference>
<feature type="peptide" id="PRO_0000033574" description="Tachykinin-related peptide 2">
    <location>
        <begin position="1"/>
        <end position="17"/>
    </location>
</feature>
<feature type="peptide" id="PRO_0000033575" description="Tachykinin-related peptide 1">
    <location>
        <begin position="9"/>
        <end position="17"/>
    </location>
</feature>
<feature type="modified residue" description="Arginine amide" evidence="1">
    <location>
        <position position="17"/>
    </location>
</feature>
<sequence length="17" mass="1798">APEESPKRAPSGFLGVR</sequence>
<protein>
    <recommendedName>
        <fullName>Tachykinin-related peptide 2</fullName>
        <shortName>LemTRP 2</shortName>
    </recommendedName>
    <component>
        <recommendedName>
            <fullName>Tachykinin-related peptide 1</fullName>
            <shortName>LemTRP 1</shortName>
        </recommendedName>
    </component>
</protein>
<evidence type="ECO:0000269" key="1">
    <source>
    </source>
</evidence>
<evidence type="ECO:0000269" key="2">
    <source>
    </source>
</evidence>
<comment type="function">
    <text>Myoactive peptide. Increases the amplitude and frequency of spontaneous contractions and tonus of hindgut muscle.</text>
</comment>
<comment type="subcellular location">
    <subcellularLocation>
        <location>Secreted</location>
    </subcellularLocation>
</comment>
<comment type="tissue specificity">
    <text>Midgut and brain.</text>
</comment>
<comment type="mass spectrometry" mass="1796.4" method="MALDI" evidence="2">
    <molecule>Tachykinin-related peptide 2</molecule>
</comment>
<comment type="mass spectrometry" mass="903.1" method="MALDI" evidence="2">
    <molecule>Tachykinin-related peptide 1</molecule>
</comment>
<dbReference type="GO" id="GO:0005576">
    <property type="term" value="C:extracellular region"/>
    <property type="evidence" value="ECO:0007669"/>
    <property type="project" value="UniProtKB-SubCell"/>
</dbReference>
<dbReference type="GO" id="GO:0007218">
    <property type="term" value="P:neuropeptide signaling pathway"/>
    <property type="evidence" value="ECO:0007669"/>
    <property type="project" value="UniProtKB-KW"/>
</dbReference>